<feature type="chain" id="PRO_1000043698" description="GTP cyclohydrolase 1">
    <location>
        <begin position="1"/>
        <end position="188"/>
    </location>
</feature>
<feature type="binding site" evidence="2">
    <location>
        <position position="75"/>
    </location>
    <ligand>
        <name>Zn(2+)</name>
        <dbReference type="ChEBI" id="CHEBI:29105"/>
    </ligand>
</feature>
<feature type="binding site" evidence="2">
    <location>
        <position position="78"/>
    </location>
    <ligand>
        <name>Zn(2+)</name>
        <dbReference type="ChEBI" id="CHEBI:29105"/>
    </ligand>
</feature>
<feature type="binding site" evidence="2">
    <location>
        <position position="146"/>
    </location>
    <ligand>
        <name>Zn(2+)</name>
        <dbReference type="ChEBI" id="CHEBI:29105"/>
    </ligand>
</feature>
<organism>
    <name type="scientific">Hahella chejuensis (strain KCTC 2396)</name>
    <dbReference type="NCBI Taxonomy" id="349521"/>
    <lineage>
        <taxon>Bacteria</taxon>
        <taxon>Pseudomonadati</taxon>
        <taxon>Pseudomonadota</taxon>
        <taxon>Gammaproteobacteria</taxon>
        <taxon>Oceanospirillales</taxon>
        <taxon>Hahellaceae</taxon>
        <taxon>Hahella</taxon>
    </lineage>
</organism>
<comment type="catalytic activity">
    <reaction evidence="2">
        <text>GTP + H2O = 7,8-dihydroneopterin 3'-triphosphate + formate + H(+)</text>
        <dbReference type="Rhea" id="RHEA:17473"/>
        <dbReference type="ChEBI" id="CHEBI:15377"/>
        <dbReference type="ChEBI" id="CHEBI:15378"/>
        <dbReference type="ChEBI" id="CHEBI:15740"/>
        <dbReference type="ChEBI" id="CHEBI:37565"/>
        <dbReference type="ChEBI" id="CHEBI:58462"/>
        <dbReference type="EC" id="3.5.4.16"/>
    </reaction>
</comment>
<comment type="pathway">
    <text evidence="2">Cofactor biosynthesis; 7,8-dihydroneopterin triphosphate biosynthesis; 7,8-dihydroneopterin triphosphate from GTP: step 1/1.</text>
</comment>
<comment type="subunit">
    <text evidence="1">Toroid-shaped homodecamer, composed of two pentamers of five dimers.</text>
</comment>
<comment type="similarity">
    <text evidence="2">Belongs to the GTP cyclohydrolase I family.</text>
</comment>
<name>GCH1_HAHCH</name>
<protein>
    <recommendedName>
        <fullName evidence="2">GTP cyclohydrolase 1</fullName>
        <ecNumber evidence="2">3.5.4.16</ecNumber>
    </recommendedName>
    <alternativeName>
        <fullName evidence="2">GTP cyclohydrolase I</fullName>
        <shortName evidence="2">GTP-CH-I</shortName>
    </alternativeName>
</protein>
<evidence type="ECO:0000250" key="1"/>
<evidence type="ECO:0000255" key="2">
    <source>
        <dbReference type="HAMAP-Rule" id="MF_00223"/>
    </source>
</evidence>
<accession>Q2SPJ2</accession>
<dbReference type="EC" id="3.5.4.16" evidence="2"/>
<dbReference type="EMBL" id="CP000155">
    <property type="protein sequence ID" value="ABC27432.1"/>
    <property type="molecule type" value="Genomic_DNA"/>
</dbReference>
<dbReference type="RefSeq" id="WP_011394509.1">
    <property type="nucleotide sequence ID" value="NC_007645.1"/>
</dbReference>
<dbReference type="SMR" id="Q2SPJ2"/>
<dbReference type="STRING" id="349521.HCH_00527"/>
<dbReference type="KEGG" id="hch:HCH_00527"/>
<dbReference type="eggNOG" id="COG0302">
    <property type="taxonomic scope" value="Bacteria"/>
</dbReference>
<dbReference type="HOGENOM" id="CLU_049768_3_1_6"/>
<dbReference type="OrthoDB" id="9801207at2"/>
<dbReference type="UniPathway" id="UPA00848">
    <property type="reaction ID" value="UER00151"/>
</dbReference>
<dbReference type="Proteomes" id="UP000000238">
    <property type="component" value="Chromosome"/>
</dbReference>
<dbReference type="GO" id="GO:0005737">
    <property type="term" value="C:cytoplasm"/>
    <property type="evidence" value="ECO:0007669"/>
    <property type="project" value="TreeGrafter"/>
</dbReference>
<dbReference type="GO" id="GO:0005525">
    <property type="term" value="F:GTP binding"/>
    <property type="evidence" value="ECO:0007669"/>
    <property type="project" value="UniProtKB-KW"/>
</dbReference>
<dbReference type="GO" id="GO:0003934">
    <property type="term" value="F:GTP cyclohydrolase I activity"/>
    <property type="evidence" value="ECO:0007669"/>
    <property type="project" value="UniProtKB-UniRule"/>
</dbReference>
<dbReference type="GO" id="GO:0008270">
    <property type="term" value="F:zinc ion binding"/>
    <property type="evidence" value="ECO:0007669"/>
    <property type="project" value="UniProtKB-UniRule"/>
</dbReference>
<dbReference type="GO" id="GO:0006730">
    <property type="term" value="P:one-carbon metabolic process"/>
    <property type="evidence" value="ECO:0007669"/>
    <property type="project" value="UniProtKB-UniRule"/>
</dbReference>
<dbReference type="GO" id="GO:0006729">
    <property type="term" value="P:tetrahydrobiopterin biosynthetic process"/>
    <property type="evidence" value="ECO:0007669"/>
    <property type="project" value="TreeGrafter"/>
</dbReference>
<dbReference type="GO" id="GO:0046654">
    <property type="term" value="P:tetrahydrofolate biosynthetic process"/>
    <property type="evidence" value="ECO:0007669"/>
    <property type="project" value="UniProtKB-UniRule"/>
</dbReference>
<dbReference type="FunFam" id="3.30.1130.10:FF:000001">
    <property type="entry name" value="GTP cyclohydrolase 1"/>
    <property type="match status" value="1"/>
</dbReference>
<dbReference type="Gene3D" id="1.10.286.10">
    <property type="match status" value="1"/>
</dbReference>
<dbReference type="Gene3D" id="3.30.1130.10">
    <property type="match status" value="1"/>
</dbReference>
<dbReference type="HAMAP" id="MF_00223">
    <property type="entry name" value="FolE"/>
    <property type="match status" value="1"/>
</dbReference>
<dbReference type="InterPro" id="IPR043133">
    <property type="entry name" value="GTP-CH-I_C/QueF"/>
</dbReference>
<dbReference type="InterPro" id="IPR043134">
    <property type="entry name" value="GTP-CH-I_N"/>
</dbReference>
<dbReference type="InterPro" id="IPR001474">
    <property type="entry name" value="GTP_CycHdrlase_I"/>
</dbReference>
<dbReference type="InterPro" id="IPR018234">
    <property type="entry name" value="GTP_CycHdrlase_I_CS"/>
</dbReference>
<dbReference type="InterPro" id="IPR020602">
    <property type="entry name" value="GTP_CycHdrlase_I_dom"/>
</dbReference>
<dbReference type="NCBIfam" id="TIGR00063">
    <property type="entry name" value="folE"/>
    <property type="match status" value="1"/>
</dbReference>
<dbReference type="NCBIfam" id="NF006825">
    <property type="entry name" value="PRK09347.1-2"/>
    <property type="match status" value="1"/>
</dbReference>
<dbReference type="NCBIfam" id="NF006826">
    <property type="entry name" value="PRK09347.1-3"/>
    <property type="match status" value="1"/>
</dbReference>
<dbReference type="PANTHER" id="PTHR11109:SF7">
    <property type="entry name" value="GTP CYCLOHYDROLASE 1"/>
    <property type="match status" value="1"/>
</dbReference>
<dbReference type="PANTHER" id="PTHR11109">
    <property type="entry name" value="GTP CYCLOHYDROLASE I"/>
    <property type="match status" value="1"/>
</dbReference>
<dbReference type="Pfam" id="PF01227">
    <property type="entry name" value="GTP_cyclohydroI"/>
    <property type="match status" value="1"/>
</dbReference>
<dbReference type="SUPFAM" id="SSF55620">
    <property type="entry name" value="Tetrahydrobiopterin biosynthesis enzymes-like"/>
    <property type="match status" value="1"/>
</dbReference>
<dbReference type="PROSITE" id="PS00859">
    <property type="entry name" value="GTP_CYCLOHYDROL_1_1"/>
    <property type="match status" value="1"/>
</dbReference>
<dbReference type="PROSITE" id="PS00860">
    <property type="entry name" value="GTP_CYCLOHYDROL_1_2"/>
    <property type="match status" value="1"/>
</dbReference>
<keyword id="KW-0342">GTP-binding</keyword>
<keyword id="KW-0378">Hydrolase</keyword>
<keyword id="KW-0479">Metal-binding</keyword>
<keyword id="KW-0547">Nucleotide-binding</keyword>
<keyword id="KW-0554">One-carbon metabolism</keyword>
<keyword id="KW-1185">Reference proteome</keyword>
<keyword id="KW-0862">Zinc</keyword>
<gene>
    <name evidence="2" type="primary">folE</name>
    <name type="ordered locus">HCH_00527</name>
</gene>
<proteinExistence type="inferred from homology"/>
<reference key="1">
    <citation type="journal article" date="2005" name="Nucleic Acids Res.">
        <title>Genomic blueprint of Hahella chejuensis, a marine microbe producing an algicidal agent.</title>
        <authorList>
            <person name="Jeong H."/>
            <person name="Yim J.H."/>
            <person name="Lee C."/>
            <person name="Choi S.-H."/>
            <person name="Park Y.K."/>
            <person name="Yoon S.H."/>
            <person name="Hur C.-G."/>
            <person name="Kang H.-Y."/>
            <person name="Kim D."/>
            <person name="Lee H.H."/>
            <person name="Park K.H."/>
            <person name="Park S.-H."/>
            <person name="Park H.-S."/>
            <person name="Lee H.K."/>
            <person name="Oh T.K."/>
            <person name="Kim J.F."/>
        </authorList>
    </citation>
    <scope>NUCLEOTIDE SEQUENCE [LARGE SCALE GENOMIC DNA]</scope>
    <source>
        <strain>KCTC 2396</strain>
    </source>
</reference>
<sequence>MLDKLVAQYSAIIESLGEDVNREGLRDTPKRAAKAMQFLCRGYNQSLEEVTNGAVFESDTDEMVLVKDIELYSLCEHHLLPFIGRCHIAYIPNGKVLGLSKFARIVDMFARRMQIQENLTRQIAEAVLEVTNAHGVGVIIEARHMCMMMRGVEKQNSVMSSSVMLGSMRNNPSTRSEFLTLVHSRRAL</sequence>